<evidence type="ECO:0000250" key="1"/>
<evidence type="ECO:0000250" key="2">
    <source>
        <dbReference type="UniProtKB" id="Q99299"/>
    </source>
</evidence>
<evidence type="ECO:0000256" key="3">
    <source>
        <dbReference type="SAM" id="MobiDB-lite"/>
    </source>
</evidence>
<evidence type="ECO:0000305" key="4"/>
<comment type="subcellular location">
    <subcellularLocation>
        <location evidence="1">Bud neck</location>
    </subcellularLocation>
</comment>
<comment type="similarity">
    <text evidence="4">Belongs to the AIM44 family.</text>
</comment>
<dbReference type="EMBL" id="ABSV01002317">
    <property type="protein sequence ID" value="EDZ68932.1"/>
    <property type="molecule type" value="Genomic_DNA"/>
</dbReference>
<dbReference type="SMR" id="B5VT12"/>
<dbReference type="OrthoDB" id="36972at4893"/>
<dbReference type="Proteomes" id="UP000008988">
    <property type="component" value="Unassembled WGS sequence"/>
</dbReference>
<dbReference type="GO" id="GO:0005935">
    <property type="term" value="C:cellular bud neck"/>
    <property type="evidence" value="ECO:0007669"/>
    <property type="project" value="UniProtKB-SubCell"/>
</dbReference>
<feature type="chain" id="PRO_0000408701" description="Altered inheritance of mitochondria protein 44">
    <location>
        <begin position="1"/>
        <end position="758"/>
    </location>
</feature>
<feature type="region of interest" description="Disordered" evidence="3">
    <location>
        <begin position="55"/>
        <end position="77"/>
    </location>
</feature>
<feature type="region of interest" description="Disordered" evidence="3">
    <location>
        <begin position="314"/>
        <end position="414"/>
    </location>
</feature>
<feature type="region of interest" description="Disordered" evidence="3">
    <location>
        <begin position="636"/>
        <end position="709"/>
    </location>
</feature>
<feature type="compositionally biased region" description="Low complexity" evidence="3">
    <location>
        <begin position="315"/>
        <end position="330"/>
    </location>
</feature>
<feature type="compositionally biased region" description="Polar residues" evidence="3">
    <location>
        <begin position="338"/>
        <end position="348"/>
    </location>
</feature>
<feature type="compositionally biased region" description="Polar residues" evidence="3">
    <location>
        <begin position="355"/>
        <end position="368"/>
    </location>
</feature>
<feature type="compositionally biased region" description="Polar residues" evidence="3">
    <location>
        <begin position="400"/>
        <end position="414"/>
    </location>
</feature>
<feature type="compositionally biased region" description="Acidic residues" evidence="3">
    <location>
        <begin position="651"/>
        <end position="689"/>
    </location>
</feature>
<feature type="compositionally biased region" description="Basic and acidic residues" evidence="3">
    <location>
        <begin position="690"/>
        <end position="705"/>
    </location>
</feature>
<feature type="modified residue" description="Phosphoserine" evidence="2">
    <location>
        <position position="25"/>
    </location>
</feature>
<sequence>MIIRAPIRTKTKSFRGDQMDFKFPSNESLPRGTLEEYHLNNHHLLNDVFAAENGVSRDEDGNSQILSDYTSTSNTNTNSGYSSNGYYSFANISDNTTSSPRIVINQNETARLTSSDSNKSDFFASHDFPGNDSLHYSSSSVVKNQLHSMEAIPEGNITGSISTAFQTIPTADNVSYDIAPSSASSLLPRKSTSKSAILPSTQEAKPMTKLNMEKDIKTIELNNSVVPKPKKKLNRVPTIRRVESSRFSNSRYSSSVSSKSSSSRCSLKRSKAIRCKGGLLYYFTSLGIKIKKKLRKLRLVLRRRLFSYNVQKVPSATNSKTTKSKANINNKSKKRGTNLVNKNSNSTPRQKKSQRYVSNLQRSISSKSLVPVLAPQKKTKPLTVDTKFKANHPQSEDSKVGSNTPRSPLVSYTPSLRRTNSSIRRAASILTASATMTPANNKNSFISVPDNVSHAVTRNSSMYSRSRLVRSKPSTALNAIARQPSIVVENKVIPLSMNRYSIKEEDEYVIDTSSMRELSPVNSVCSSDYDRESSESYSNYADAMETTEVDNKDRVECNNEIQNVNANNEETSNEESYNLMKHYLSTVIAQRIMLRVQIARIQNNKSNVVYMNKSAETNSTIYEDLADTLLTEYEADGSSSQIFDGVSVRADEEEEEDEDDEDDEEEEEENDDEEDEEDEEDEEDDEEEEEKRKEGEGRNLAKEVDELAELSPMRKQSDLSITLRSPFAMLNSAYSNSIISLPTGVVKRSLTLPVGMKI</sequence>
<gene>
    <name type="primary">AIM44</name>
    <name type="ORF">AWRI1631_161090</name>
</gene>
<name>AIM44_YEAS6</name>
<protein>
    <recommendedName>
        <fullName>Altered inheritance of mitochondria protein 44</fullName>
    </recommendedName>
</protein>
<proteinExistence type="inferred from homology"/>
<reference key="1">
    <citation type="journal article" date="2008" name="FEMS Yeast Res.">
        <title>Comparative genome analysis of a Saccharomyces cerevisiae wine strain.</title>
        <authorList>
            <person name="Borneman A.R."/>
            <person name="Forgan A.H."/>
            <person name="Pretorius I.S."/>
            <person name="Chambers P.J."/>
        </authorList>
    </citation>
    <scope>NUCLEOTIDE SEQUENCE [LARGE SCALE GENOMIC DNA]</scope>
    <source>
        <strain>AWRI1631</strain>
    </source>
</reference>
<accession>B5VT12</accession>
<keyword id="KW-0597">Phosphoprotein</keyword>
<organism>
    <name type="scientific">Saccharomyces cerevisiae (strain AWRI1631)</name>
    <name type="common">Baker's yeast</name>
    <dbReference type="NCBI Taxonomy" id="545124"/>
    <lineage>
        <taxon>Eukaryota</taxon>
        <taxon>Fungi</taxon>
        <taxon>Dikarya</taxon>
        <taxon>Ascomycota</taxon>
        <taxon>Saccharomycotina</taxon>
        <taxon>Saccharomycetes</taxon>
        <taxon>Saccharomycetales</taxon>
        <taxon>Saccharomycetaceae</taxon>
        <taxon>Saccharomyces</taxon>
    </lineage>
</organism>